<organism>
    <name type="scientific">Klebsiella pneumoniae (strain 342)</name>
    <dbReference type="NCBI Taxonomy" id="507522"/>
    <lineage>
        <taxon>Bacteria</taxon>
        <taxon>Pseudomonadati</taxon>
        <taxon>Pseudomonadota</taxon>
        <taxon>Gammaproteobacteria</taxon>
        <taxon>Enterobacterales</taxon>
        <taxon>Enterobacteriaceae</taxon>
        <taxon>Klebsiella/Raoultella group</taxon>
        <taxon>Klebsiella</taxon>
        <taxon>Klebsiella pneumoniae complex</taxon>
    </lineage>
</organism>
<protein>
    <recommendedName>
        <fullName evidence="1">Cysteine desulfurase IscS</fullName>
        <ecNumber evidence="1">2.8.1.7</ecNumber>
    </recommendedName>
</protein>
<sequence>MKLPIYLDYSATTPVDPRVAEKMMQFLTMDGTFGNPASRSHRFGWQAEEAVDIARNQIAELVGADPREIVFTSGATESDNLAIKGAANFYQKKGKHIITSKTEHKAVLDTCRQLEREGFEVTYLAPQRNGIIDLKELEAAMRDDTILVSIMHVNNEIGVVQDIATIGEMCRARGIIYHVDATQSVGKLPIDLSQLKVDLMSFSGHKIYGPKGIGALYVRRKPRIRIEAQMHGGGHERGMRSGTLPVHQIVGMGEAYRIAKEEMESEMARLRGLRDRLWNGVKDMEEVYLNGDLEQGAPNILNVSFNYVEGESLIMALKDLAVSSGSACTSASLEPSYVLRALGMTDELAHSSIRFSLGRFTTEEEIDYTINLVRNSIGRLRDLSPLWEMFKQGVDLNSIEWSHH</sequence>
<dbReference type="EC" id="2.8.1.7" evidence="1"/>
<dbReference type="EMBL" id="CP000964">
    <property type="protein sequence ID" value="ACI09434.1"/>
    <property type="molecule type" value="Genomic_DNA"/>
</dbReference>
<dbReference type="SMR" id="B5XNJ7"/>
<dbReference type="KEGG" id="kpe:KPK_1257"/>
<dbReference type="HOGENOM" id="CLU_003433_0_2_6"/>
<dbReference type="UniPathway" id="UPA00266"/>
<dbReference type="Proteomes" id="UP000001734">
    <property type="component" value="Chromosome"/>
</dbReference>
<dbReference type="GO" id="GO:1990221">
    <property type="term" value="C:L-cysteine desulfurase complex"/>
    <property type="evidence" value="ECO:0007669"/>
    <property type="project" value="UniProtKB-ARBA"/>
</dbReference>
<dbReference type="GO" id="GO:0051537">
    <property type="term" value="F:2 iron, 2 sulfur cluster binding"/>
    <property type="evidence" value="ECO:0007669"/>
    <property type="project" value="UniProtKB-UniRule"/>
</dbReference>
<dbReference type="GO" id="GO:0031071">
    <property type="term" value="F:cysteine desulfurase activity"/>
    <property type="evidence" value="ECO:0007669"/>
    <property type="project" value="UniProtKB-UniRule"/>
</dbReference>
<dbReference type="GO" id="GO:0046872">
    <property type="term" value="F:metal ion binding"/>
    <property type="evidence" value="ECO:0007669"/>
    <property type="project" value="UniProtKB-KW"/>
</dbReference>
<dbReference type="GO" id="GO:0030170">
    <property type="term" value="F:pyridoxal phosphate binding"/>
    <property type="evidence" value="ECO:0007669"/>
    <property type="project" value="UniProtKB-UniRule"/>
</dbReference>
<dbReference type="GO" id="GO:0044571">
    <property type="term" value="P:[2Fe-2S] cluster assembly"/>
    <property type="evidence" value="ECO:0007669"/>
    <property type="project" value="UniProtKB-UniRule"/>
</dbReference>
<dbReference type="FunFam" id="3.40.640.10:FF:000003">
    <property type="entry name" value="Cysteine desulfurase IscS"/>
    <property type="match status" value="1"/>
</dbReference>
<dbReference type="FunFam" id="3.90.1150.10:FF:000002">
    <property type="entry name" value="Cysteine desulfurase IscS"/>
    <property type="match status" value="1"/>
</dbReference>
<dbReference type="Gene3D" id="3.90.1150.10">
    <property type="entry name" value="Aspartate Aminotransferase, domain 1"/>
    <property type="match status" value="1"/>
</dbReference>
<dbReference type="Gene3D" id="3.40.640.10">
    <property type="entry name" value="Type I PLP-dependent aspartate aminotransferase-like (Major domain)"/>
    <property type="match status" value="1"/>
</dbReference>
<dbReference type="HAMAP" id="MF_00331">
    <property type="entry name" value="Cys_desulf_IscS"/>
    <property type="match status" value="1"/>
</dbReference>
<dbReference type="InterPro" id="IPR000192">
    <property type="entry name" value="Aminotrans_V_dom"/>
</dbReference>
<dbReference type="InterPro" id="IPR020578">
    <property type="entry name" value="Aminotrans_V_PyrdxlP_BS"/>
</dbReference>
<dbReference type="InterPro" id="IPR010240">
    <property type="entry name" value="Cys_deSase_IscS"/>
</dbReference>
<dbReference type="InterPro" id="IPR016454">
    <property type="entry name" value="Cysteine_dSase"/>
</dbReference>
<dbReference type="InterPro" id="IPR015424">
    <property type="entry name" value="PyrdxlP-dep_Trfase"/>
</dbReference>
<dbReference type="InterPro" id="IPR015421">
    <property type="entry name" value="PyrdxlP-dep_Trfase_major"/>
</dbReference>
<dbReference type="InterPro" id="IPR015422">
    <property type="entry name" value="PyrdxlP-dep_Trfase_small"/>
</dbReference>
<dbReference type="NCBIfam" id="TIGR02006">
    <property type="entry name" value="IscS"/>
    <property type="match status" value="1"/>
</dbReference>
<dbReference type="NCBIfam" id="NF002806">
    <property type="entry name" value="PRK02948.1"/>
    <property type="match status" value="1"/>
</dbReference>
<dbReference type="NCBIfam" id="NF010611">
    <property type="entry name" value="PRK14012.1"/>
    <property type="match status" value="1"/>
</dbReference>
<dbReference type="PANTHER" id="PTHR11601:SF34">
    <property type="entry name" value="CYSTEINE DESULFURASE"/>
    <property type="match status" value="1"/>
</dbReference>
<dbReference type="PANTHER" id="PTHR11601">
    <property type="entry name" value="CYSTEINE DESULFURYLASE FAMILY MEMBER"/>
    <property type="match status" value="1"/>
</dbReference>
<dbReference type="Pfam" id="PF00266">
    <property type="entry name" value="Aminotran_5"/>
    <property type="match status" value="1"/>
</dbReference>
<dbReference type="PIRSF" id="PIRSF005572">
    <property type="entry name" value="NifS"/>
    <property type="match status" value="1"/>
</dbReference>
<dbReference type="SUPFAM" id="SSF53383">
    <property type="entry name" value="PLP-dependent transferases"/>
    <property type="match status" value="1"/>
</dbReference>
<dbReference type="PROSITE" id="PS00595">
    <property type="entry name" value="AA_TRANSFER_CLASS_5"/>
    <property type="match status" value="1"/>
</dbReference>
<evidence type="ECO:0000255" key="1">
    <source>
        <dbReference type="HAMAP-Rule" id="MF_00331"/>
    </source>
</evidence>
<reference key="1">
    <citation type="journal article" date="2008" name="PLoS Genet.">
        <title>Complete genome sequence of the N2-fixing broad host range endophyte Klebsiella pneumoniae 342 and virulence predictions verified in mice.</title>
        <authorList>
            <person name="Fouts D.E."/>
            <person name="Tyler H.L."/>
            <person name="DeBoy R.T."/>
            <person name="Daugherty S."/>
            <person name="Ren Q."/>
            <person name="Badger J.H."/>
            <person name="Durkin A.S."/>
            <person name="Huot H."/>
            <person name="Shrivastava S."/>
            <person name="Kothari S."/>
            <person name="Dodson R.J."/>
            <person name="Mohamoud Y."/>
            <person name="Khouri H."/>
            <person name="Roesch L.F.W."/>
            <person name="Krogfelt K.A."/>
            <person name="Struve C."/>
            <person name="Triplett E.W."/>
            <person name="Methe B.A."/>
        </authorList>
    </citation>
    <scope>NUCLEOTIDE SEQUENCE [LARGE SCALE GENOMIC DNA]</scope>
    <source>
        <strain>342</strain>
    </source>
</reference>
<feature type="chain" id="PRO_1000119633" description="Cysteine desulfurase IscS">
    <location>
        <begin position="1"/>
        <end position="404"/>
    </location>
</feature>
<feature type="active site" description="Cysteine persulfide intermediate" evidence="1">
    <location>
        <position position="328"/>
    </location>
</feature>
<feature type="binding site" evidence="1">
    <location>
        <begin position="75"/>
        <end position="76"/>
    </location>
    <ligand>
        <name>pyridoxal 5'-phosphate</name>
        <dbReference type="ChEBI" id="CHEBI:597326"/>
    </ligand>
</feature>
<feature type="binding site" evidence="1">
    <location>
        <position position="155"/>
    </location>
    <ligand>
        <name>pyridoxal 5'-phosphate</name>
        <dbReference type="ChEBI" id="CHEBI:597326"/>
    </ligand>
</feature>
<feature type="binding site" evidence="1">
    <location>
        <position position="183"/>
    </location>
    <ligand>
        <name>pyridoxal 5'-phosphate</name>
        <dbReference type="ChEBI" id="CHEBI:597326"/>
    </ligand>
</feature>
<feature type="binding site" evidence="1">
    <location>
        <begin position="203"/>
        <end position="205"/>
    </location>
    <ligand>
        <name>pyridoxal 5'-phosphate</name>
        <dbReference type="ChEBI" id="CHEBI:597326"/>
    </ligand>
</feature>
<feature type="binding site" evidence="1">
    <location>
        <position position="243"/>
    </location>
    <ligand>
        <name>pyridoxal 5'-phosphate</name>
        <dbReference type="ChEBI" id="CHEBI:597326"/>
    </ligand>
</feature>
<feature type="binding site" description="via persulfide group" evidence="1">
    <location>
        <position position="328"/>
    </location>
    <ligand>
        <name>[2Fe-2S] cluster</name>
        <dbReference type="ChEBI" id="CHEBI:190135"/>
        <note>ligand shared with IscU</note>
    </ligand>
</feature>
<feature type="modified residue" description="N6-(pyridoxal phosphate)lysine" evidence="1">
    <location>
        <position position="206"/>
    </location>
</feature>
<proteinExistence type="inferred from homology"/>
<comment type="function">
    <text evidence="1">Master enzyme that delivers sulfur to a number of partners involved in Fe-S cluster assembly, tRNA modification or cofactor biosynthesis. Catalyzes the removal of elemental sulfur atoms from cysteine to produce alanine. Functions as a sulfur delivery protein for Fe-S cluster synthesis onto IscU, an Fe-S scaffold assembly protein, as well as other S acceptor proteins.</text>
</comment>
<comment type="catalytic activity">
    <reaction evidence="1">
        <text>(sulfur carrier)-H + L-cysteine = (sulfur carrier)-SH + L-alanine</text>
        <dbReference type="Rhea" id="RHEA:43892"/>
        <dbReference type="Rhea" id="RHEA-COMP:14737"/>
        <dbReference type="Rhea" id="RHEA-COMP:14739"/>
        <dbReference type="ChEBI" id="CHEBI:29917"/>
        <dbReference type="ChEBI" id="CHEBI:35235"/>
        <dbReference type="ChEBI" id="CHEBI:57972"/>
        <dbReference type="ChEBI" id="CHEBI:64428"/>
        <dbReference type="EC" id="2.8.1.7"/>
    </reaction>
</comment>
<comment type="cofactor">
    <cofactor evidence="1">
        <name>pyridoxal 5'-phosphate</name>
        <dbReference type="ChEBI" id="CHEBI:597326"/>
    </cofactor>
</comment>
<comment type="pathway">
    <text evidence="1">Cofactor biosynthesis; iron-sulfur cluster biosynthesis.</text>
</comment>
<comment type="subunit">
    <text evidence="1">Homodimer. Forms a heterotetramer with IscU, interacts with other sulfur acceptors.</text>
</comment>
<comment type="subcellular location">
    <subcellularLocation>
        <location evidence="1">Cytoplasm</location>
    </subcellularLocation>
</comment>
<comment type="similarity">
    <text evidence="1">Belongs to the class-V pyridoxal-phosphate-dependent aminotransferase family. NifS/IscS subfamily.</text>
</comment>
<keyword id="KW-0001">2Fe-2S</keyword>
<keyword id="KW-0963">Cytoplasm</keyword>
<keyword id="KW-0408">Iron</keyword>
<keyword id="KW-0411">Iron-sulfur</keyword>
<keyword id="KW-0479">Metal-binding</keyword>
<keyword id="KW-0663">Pyridoxal phosphate</keyword>
<keyword id="KW-0808">Transferase</keyword>
<accession>B5XNJ7</accession>
<gene>
    <name evidence="1" type="primary">iscS</name>
    <name type="ordered locus">KPK_1257</name>
</gene>
<name>ISCS_KLEP3</name>